<sequence>MITSLTGTILQRRPPWLWLDVQGVGYELEMPLSGFYQMPAEGAALTVHTHLTIREDAHLLYGFMTVAERDMFRLLIRVNGIGGKVALACLSGLPAERLSQAVAEGNTAQLTAIPGIGPKTAERLVVELRDKMGGIAPGPMGRGGAGDPRQEAIAALLTLGYKPAQASQAIAGLADGLGLEDLIRQSLQNLSRH</sequence>
<keyword id="KW-0963">Cytoplasm</keyword>
<keyword id="KW-0227">DNA damage</keyword>
<keyword id="KW-0233">DNA recombination</keyword>
<keyword id="KW-0234">DNA repair</keyword>
<keyword id="KW-0238">DNA-binding</keyword>
<keyword id="KW-1185">Reference proteome</keyword>
<gene>
    <name evidence="1" type="primary">ruvA</name>
    <name type="ordered locus">AFE_0061</name>
</gene>
<organism>
    <name type="scientific">Acidithiobacillus ferrooxidans (strain ATCC 23270 / DSM 14882 / CIP 104768 / NCIMB 8455)</name>
    <name type="common">Ferrobacillus ferrooxidans (strain ATCC 23270)</name>
    <dbReference type="NCBI Taxonomy" id="243159"/>
    <lineage>
        <taxon>Bacteria</taxon>
        <taxon>Pseudomonadati</taxon>
        <taxon>Pseudomonadota</taxon>
        <taxon>Acidithiobacillia</taxon>
        <taxon>Acidithiobacillales</taxon>
        <taxon>Acidithiobacillaceae</taxon>
        <taxon>Acidithiobacillus</taxon>
    </lineage>
</organism>
<dbReference type="EMBL" id="CP001219">
    <property type="protein sequence ID" value="ACK77891.1"/>
    <property type="molecule type" value="Genomic_DNA"/>
</dbReference>
<dbReference type="RefSeq" id="WP_009567692.1">
    <property type="nucleotide sequence ID" value="NC_011761.1"/>
</dbReference>
<dbReference type="SMR" id="B7J3G2"/>
<dbReference type="STRING" id="243159.AFE_0061"/>
<dbReference type="PaxDb" id="243159-AFE_0061"/>
<dbReference type="GeneID" id="65279460"/>
<dbReference type="KEGG" id="afr:AFE_0061"/>
<dbReference type="eggNOG" id="COG0632">
    <property type="taxonomic scope" value="Bacteria"/>
</dbReference>
<dbReference type="HOGENOM" id="CLU_087936_0_0_6"/>
<dbReference type="Proteomes" id="UP000001362">
    <property type="component" value="Chromosome"/>
</dbReference>
<dbReference type="GO" id="GO:0005737">
    <property type="term" value="C:cytoplasm"/>
    <property type="evidence" value="ECO:0007669"/>
    <property type="project" value="UniProtKB-SubCell"/>
</dbReference>
<dbReference type="GO" id="GO:0009379">
    <property type="term" value="C:Holliday junction helicase complex"/>
    <property type="evidence" value="ECO:0007669"/>
    <property type="project" value="InterPro"/>
</dbReference>
<dbReference type="GO" id="GO:0048476">
    <property type="term" value="C:Holliday junction resolvase complex"/>
    <property type="evidence" value="ECO:0007669"/>
    <property type="project" value="UniProtKB-UniRule"/>
</dbReference>
<dbReference type="GO" id="GO:0005524">
    <property type="term" value="F:ATP binding"/>
    <property type="evidence" value="ECO:0007669"/>
    <property type="project" value="InterPro"/>
</dbReference>
<dbReference type="GO" id="GO:0000400">
    <property type="term" value="F:four-way junction DNA binding"/>
    <property type="evidence" value="ECO:0007669"/>
    <property type="project" value="UniProtKB-UniRule"/>
</dbReference>
<dbReference type="GO" id="GO:0009378">
    <property type="term" value="F:four-way junction helicase activity"/>
    <property type="evidence" value="ECO:0007669"/>
    <property type="project" value="InterPro"/>
</dbReference>
<dbReference type="GO" id="GO:0006310">
    <property type="term" value="P:DNA recombination"/>
    <property type="evidence" value="ECO:0007669"/>
    <property type="project" value="UniProtKB-UniRule"/>
</dbReference>
<dbReference type="GO" id="GO:0006281">
    <property type="term" value="P:DNA repair"/>
    <property type="evidence" value="ECO:0007669"/>
    <property type="project" value="UniProtKB-UniRule"/>
</dbReference>
<dbReference type="CDD" id="cd14332">
    <property type="entry name" value="UBA_RuvA_C"/>
    <property type="match status" value="1"/>
</dbReference>
<dbReference type="Gene3D" id="1.10.150.20">
    <property type="entry name" value="5' to 3' exonuclease, C-terminal subdomain"/>
    <property type="match status" value="1"/>
</dbReference>
<dbReference type="Gene3D" id="1.10.8.10">
    <property type="entry name" value="DNA helicase RuvA subunit, C-terminal domain"/>
    <property type="match status" value="1"/>
</dbReference>
<dbReference type="Gene3D" id="2.40.50.140">
    <property type="entry name" value="Nucleic acid-binding proteins"/>
    <property type="match status" value="1"/>
</dbReference>
<dbReference type="HAMAP" id="MF_00031">
    <property type="entry name" value="DNA_HJ_migration_RuvA"/>
    <property type="match status" value="1"/>
</dbReference>
<dbReference type="InterPro" id="IPR013849">
    <property type="entry name" value="DNA_helicase_Holl-junc_RuvA_I"/>
</dbReference>
<dbReference type="InterPro" id="IPR003583">
    <property type="entry name" value="Hlx-hairpin-Hlx_DNA-bd_motif"/>
</dbReference>
<dbReference type="InterPro" id="IPR012340">
    <property type="entry name" value="NA-bd_OB-fold"/>
</dbReference>
<dbReference type="InterPro" id="IPR000085">
    <property type="entry name" value="RuvA"/>
</dbReference>
<dbReference type="InterPro" id="IPR010994">
    <property type="entry name" value="RuvA_2-like"/>
</dbReference>
<dbReference type="InterPro" id="IPR011114">
    <property type="entry name" value="RuvA_C"/>
</dbReference>
<dbReference type="InterPro" id="IPR036267">
    <property type="entry name" value="RuvA_C_sf"/>
</dbReference>
<dbReference type="NCBIfam" id="TIGR00084">
    <property type="entry name" value="ruvA"/>
    <property type="match status" value="1"/>
</dbReference>
<dbReference type="Pfam" id="PF14520">
    <property type="entry name" value="HHH_5"/>
    <property type="match status" value="1"/>
</dbReference>
<dbReference type="Pfam" id="PF07499">
    <property type="entry name" value="RuvA_C"/>
    <property type="match status" value="1"/>
</dbReference>
<dbReference type="Pfam" id="PF01330">
    <property type="entry name" value="RuvA_N"/>
    <property type="match status" value="1"/>
</dbReference>
<dbReference type="SMART" id="SM00278">
    <property type="entry name" value="HhH1"/>
    <property type="match status" value="2"/>
</dbReference>
<dbReference type="SUPFAM" id="SSF46929">
    <property type="entry name" value="DNA helicase RuvA subunit, C-terminal domain"/>
    <property type="match status" value="1"/>
</dbReference>
<dbReference type="SUPFAM" id="SSF50249">
    <property type="entry name" value="Nucleic acid-binding proteins"/>
    <property type="match status" value="1"/>
</dbReference>
<dbReference type="SUPFAM" id="SSF47781">
    <property type="entry name" value="RuvA domain 2-like"/>
    <property type="match status" value="1"/>
</dbReference>
<proteinExistence type="inferred from homology"/>
<feature type="chain" id="PRO_1000116445" description="Holliday junction branch migration complex subunit RuvA">
    <location>
        <begin position="1"/>
        <end position="193"/>
    </location>
</feature>
<feature type="region of interest" description="Domain I" evidence="1">
    <location>
        <begin position="1"/>
        <end position="64"/>
    </location>
</feature>
<feature type="region of interest" description="Domain II" evidence="1">
    <location>
        <begin position="65"/>
        <end position="139"/>
    </location>
</feature>
<feature type="region of interest" description="Flexible linker" evidence="1">
    <location>
        <begin position="139"/>
        <end position="143"/>
    </location>
</feature>
<feature type="region of interest" description="Domain III" evidence="1">
    <location>
        <begin position="144"/>
        <end position="193"/>
    </location>
</feature>
<accession>B7J3G2</accession>
<name>RUVA_ACIF2</name>
<comment type="function">
    <text evidence="1">The RuvA-RuvB-RuvC complex processes Holliday junction (HJ) DNA during genetic recombination and DNA repair, while the RuvA-RuvB complex plays an important role in the rescue of blocked DNA replication forks via replication fork reversal (RFR). RuvA specifically binds to HJ cruciform DNA, conferring on it an open structure. The RuvB hexamer acts as an ATP-dependent pump, pulling dsDNA into and through the RuvAB complex. HJ branch migration allows RuvC to scan DNA until it finds its consensus sequence, where it cleaves and resolves the cruciform DNA.</text>
</comment>
<comment type="subunit">
    <text evidence="1">Homotetramer. Forms an RuvA(8)-RuvB(12)-Holliday junction (HJ) complex. HJ DNA is sandwiched between 2 RuvA tetramers; dsDNA enters through RuvA and exits via RuvB. An RuvB hexamer assembles on each DNA strand where it exits the tetramer. Each RuvB hexamer is contacted by two RuvA subunits (via domain III) on 2 adjacent RuvB subunits; this complex drives branch migration. In the full resolvosome a probable DNA-RuvA(4)-RuvB(12)-RuvC(2) complex forms which resolves the HJ.</text>
</comment>
<comment type="subcellular location">
    <subcellularLocation>
        <location evidence="1">Cytoplasm</location>
    </subcellularLocation>
</comment>
<comment type="domain">
    <text evidence="1">Has three domains with a flexible linker between the domains II and III and assumes an 'L' shape. Domain III is highly mobile and contacts RuvB.</text>
</comment>
<comment type="similarity">
    <text evidence="1">Belongs to the RuvA family.</text>
</comment>
<evidence type="ECO:0000255" key="1">
    <source>
        <dbReference type="HAMAP-Rule" id="MF_00031"/>
    </source>
</evidence>
<protein>
    <recommendedName>
        <fullName evidence="1">Holliday junction branch migration complex subunit RuvA</fullName>
    </recommendedName>
</protein>
<reference key="1">
    <citation type="journal article" date="2008" name="BMC Genomics">
        <title>Acidithiobacillus ferrooxidans metabolism: from genome sequence to industrial applications.</title>
        <authorList>
            <person name="Valdes J."/>
            <person name="Pedroso I."/>
            <person name="Quatrini R."/>
            <person name="Dodson R.J."/>
            <person name="Tettelin H."/>
            <person name="Blake R. II"/>
            <person name="Eisen J.A."/>
            <person name="Holmes D.S."/>
        </authorList>
    </citation>
    <scope>NUCLEOTIDE SEQUENCE [LARGE SCALE GENOMIC DNA]</scope>
    <source>
        <strain>ATCC 23270 / DSM 14882 / CIP 104768 / NCIMB 8455</strain>
    </source>
</reference>